<gene>
    <name evidence="1" type="primary">iraD</name>
    <name type="ordered locus">SFV_4200</name>
</gene>
<protein>
    <recommendedName>
        <fullName evidence="1">Anti-adapter protein IraD</fullName>
    </recommendedName>
</protein>
<keyword id="KW-0963">Cytoplasm</keyword>
<keyword id="KW-0346">Stress response</keyword>
<name>IRAD_SHIF8</name>
<feature type="chain" id="PRO_0000337904" description="Anti-adapter protein IraD">
    <location>
        <begin position="1"/>
        <end position="130"/>
    </location>
</feature>
<comment type="function">
    <text evidence="1">Inhibits RpoS proteolysis by regulating RssB activity, thereby increasing the stability of the sigma stress factor RpoS during oxidative stress. Its effect on RpoS stability is due to its interaction with RssB, which probably blocks the interaction of RssB with RpoS, and the consequent delivery of the RssB-RpoS complex to the ClpXP protein degradation pathway.</text>
</comment>
<comment type="subunit">
    <text evidence="1">Interacts with RssB.</text>
</comment>
<comment type="subcellular location">
    <subcellularLocation>
        <location evidence="1">Cytoplasm</location>
    </subcellularLocation>
</comment>
<comment type="similarity">
    <text evidence="1">Belongs to the GpW/Gp25 family. IraD subfamily.</text>
</comment>
<comment type="sequence caution" evidence="2">
    <conflict type="erroneous initiation">
        <sequence resource="EMBL-CDS" id="ABF06184"/>
    </conflict>
</comment>
<dbReference type="EMBL" id="CP000266">
    <property type="protein sequence ID" value="ABF06184.1"/>
    <property type="status" value="ALT_INIT"/>
    <property type="molecule type" value="Genomic_DNA"/>
</dbReference>
<dbReference type="RefSeq" id="WP_000986206.1">
    <property type="nucleotide sequence ID" value="NC_008258.1"/>
</dbReference>
<dbReference type="SMR" id="Q0SXN1"/>
<dbReference type="KEGG" id="sfv:SFV_4200"/>
<dbReference type="HOGENOM" id="CLU_1977621_0_0_6"/>
<dbReference type="Proteomes" id="UP000000659">
    <property type="component" value="Chromosome"/>
</dbReference>
<dbReference type="GO" id="GO:0005737">
    <property type="term" value="C:cytoplasm"/>
    <property type="evidence" value="ECO:0007669"/>
    <property type="project" value="UniProtKB-SubCell"/>
</dbReference>
<dbReference type="GO" id="GO:0043856">
    <property type="term" value="F:anti-sigma factor antagonist activity"/>
    <property type="evidence" value="ECO:0007669"/>
    <property type="project" value="InterPro"/>
</dbReference>
<dbReference type="GO" id="GO:0034599">
    <property type="term" value="P:cellular response to oxidative stress"/>
    <property type="evidence" value="ECO:0007669"/>
    <property type="project" value="UniProtKB-UniRule"/>
</dbReference>
<dbReference type="GO" id="GO:0006974">
    <property type="term" value="P:DNA damage response"/>
    <property type="evidence" value="ECO:0007669"/>
    <property type="project" value="InterPro"/>
</dbReference>
<dbReference type="HAMAP" id="MF_02010">
    <property type="entry name" value="IraD"/>
    <property type="match status" value="1"/>
</dbReference>
<dbReference type="InterPro" id="IPR023776">
    <property type="entry name" value="Anti-adapt_IraD"/>
</dbReference>
<dbReference type="InterPro" id="IPR007048">
    <property type="entry name" value="IraD/Gp25-like"/>
</dbReference>
<dbReference type="NCBIfam" id="NF010726">
    <property type="entry name" value="PRK14128.1-1"/>
    <property type="match status" value="1"/>
</dbReference>
<dbReference type="NCBIfam" id="NF010728">
    <property type="entry name" value="PRK14128.1-3"/>
    <property type="match status" value="1"/>
</dbReference>
<dbReference type="Pfam" id="PF04965">
    <property type="entry name" value="GPW_gp25"/>
    <property type="match status" value="1"/>
</dbReference>
<dbReference type="SUPFAM" id="SSF160719">
    <property type="entry name" value="gpW/gp25-like"/>
    <property type="match status" value="1"/>
</dbReference>
<accession>Q0SXN1</accession>
<sequence>MMRQSLQAVLPEISGNKTSLLRKSVCSDLLTLFNSPHSALPSLLVSGMPEWQVHNPSDKHLQSWYCRQLRSALLFHEPRIAALQVNLKEAYCHTLAISLEIMLYHDDEPLTFDLVWDNGGWRSATLENVS</sequence>
<organism>
    <name type="scientific">Shigella flexneri serotype 5b (strain 8401)</name>
    <dbReference type="NCBI Taxonomy" id="373384"/>
    <lineage>
        <taxon>Bacteria</taxon>
        <taxon>Pseudomonadati</taxon>
        <taxon>Pseudomonadota</taxon>
        <taxon>Gammaproteobacteria</taxon>
        <taxon>Enterobacterales</taxon>
        <taxon>Enterobacteriaceae</taxon>
        <taxon>Shigella</taxon>
    </lineage>
</organism>
<proteinExistence type="inferred from homology"/>
<evidence type="ECO:0000255" key="1">
    <source>
        <dbReference type="HAMAP-Rule" id="MF_02010"/>
    </source>
</evidence>
<evidence type="ECO:0000305" key="2"/>
<reference key="1">
    <citation type="journal article" date="2006" name="BMC Genomics">
        <title>Complete genome sequence of Shigella flexneri 5b and comparison with Shigella flexneri 2a.</title>
        <authorList>
            <person name="Nie H."/>
            <person name="Yang F."/>
            <person name="Zhang X."/>
            <person name="Yang J."/>
            <person name="Chen L."/>
            <person name="Wang J."/>
            <person name="Xiong Z."/>
            <person name="Peng J."/>
            <person name="Sun L."/>
            <person name="Dong J."/>
            <person name="Xue Y."/>
            <person name="Xu X."/>
            <person name="Chen S."/>
            <person name="Yao Z."/>
            <person name="Shen Y."/>
            <person name="Jin Q."/>
        </authorList>
    </citation>
    <scope>NUCLEOTIDE SEQUENCE [LARGE SCALE GENOMIC DNA]</scope>
    <source>
        <strain>8401</strain>
    </source>
</reference>